<protein>
    <recommendedName>
        <fullName evidence="1">Lipoprotein-releasing system ATP-binding protein LolD</fullName>
        <ecNumber evidence="1">7.6.2.-</ecNumber>
    </recommendedName>
</protein>
<comment type="function">
    <text evidence="1">Part of the ABC transporter complex LolCDE involved in the translocation of mature outer membrane-directed lipoproteins, from the inner membrane to the periplasmic chaperone, LolA. Responsible for the formation of the LolA-lipoprotein complex in an ATP-dependent manner.</text>
</comment>
<comment type="subunit">
    <text evidence="1">The complex is composed of two ATP-binding proteins (LolD) and two transmembrane proteins (LolC and LolE).</text>
</comment>
<comment type="subcellular location">
    <subcellularLocation>
        <location evidence="1">Cell inner membrane</location>
        <topology evidence="1">Peripheral membrane protein</topology>
    </subcellularLocation>
</comment>
<comment type="similarity">
    <text evidence="1">Belongs to the ABC transporter superfamily. Lipoprotein translocase (TC 3.A.1.125) family.</text>
</comment>
<organism>
    <name type="scientific">Shigella flexneri</name>
    <dbReference type="NCBI Taxonomy" id="623"/>
    <lineage>
        <taxon>Bacteria</taxon>
        <taxon>Pseudomonadati</taxon>
        <taxon>Pseudomonadota</taxon>
        <taxon>Gammaproteobacteria</taxon>
        <taxon>Enterobacterales</taxon>
        <taxon>Enterobacteriaceae</taxon>
        <taxon>Shigella</taxon>
    </lineage>
</organism>
<reference key="1">
    <citation type="journal article" date="2002" name="Nucleic Acids Res.">
        <title>Genome sequence of Shigella flexneri 2a: insights into pathogenicity through comparison with genomes of Escherichia coli K12 and O157.</title>
        <authorList>
            <person name="Jin Q."/>
            <person name="Yuan Z."/>
            <person name="Xu J."/>
            <person name="Wang Y."/>
            <person name="Shen Y."/>
            <person name="Lu W."/>
            <person name="Wang J."/>
            <person name="Liu H."/>
            <person name="Yang J."/>
            <person name="Yang F."/>
            <person name="Zhang X."/>
            <person name="Zhang J."/>
            <person name="Yang G."/>
            <person name="Wu H."/>
            <person name="Qu D."/>
            <person name="Dong J."/>
            <person name="Sun L."/>
            <person name="Xue Y."/>
            <person name="Zhao A."/>
            <person name="Gao Y."/>
            <person name="Zhu J."/>
            <person name="Kan B."/>
            <person name="Ding K."/>
            <person name="Chen S."/>
            <person name="Cheng H."/>
            <person name="Yao Z."/>
            <person name="He B."/>
            <person name="Chen R."/>
            <person name="Ma D."/>
            <person name="Qiang B."/>
            <person name="Wen Y."/>
            <person name="Hou Y."/>
            <person name="Yu J."/>
        </authorList>
    </citation>
    <scope>NUCLEOTIDE SEQUENCE [LARGE SCALE GENOMIC DNA]</scope>
    <source>
        <strain>301 / Serotype 2a</strain>
    </source>
</reference>
<reference key="2">
    <citation type="journal article" date="2003" name="Infect. Immun.">
        <title>Complete genome sequence and comparative genomics of Shigella flexneri serotype 2a strain 2457T.</title>
        <authorList>
            <person name="Wei J."/>
            <person name="Goldberg M.B."/>
            <person name="Burland V."/>
            <person name="Venkatesan M.M."/>
            <person name="Deng W."/>
            <person name="Fournier G."/>
            <person name="Mayhew G.F."/>
            <person name="Plunkett G. III"/>
            <person name="Rose D.J."/>
            <person name="Darling A."/>
            <person name="Mau B."/>
            <person name="Perna N.T."/>
            <person name="Payne S.M."/>
            <person name="Runyen-Janecky L.J."/>
            <person name="Zhou S."/>
            <person name="Schwartz D.C."/>
            <person name="Blattner F.R."/>
        </authorList>
    </citation>
    <scope>NUCLEOTIDE SEQUENCE [LARGE SCALE GENOMIC DNA]</scope>
    <source>
        <strain>ATCC 700930 / 2457T / Serotype 2a</strain>
    </source>
</reference>
<gene>
    <name evidence="1" type="primary">lolD</name>
    <name type="ordered locus">SF1121</name>
    <name type="ordered locus">S1201</name>
</gene>
<accession>Q83RS0</accession>
<sequence length="233" mass="25375">MNKILLQCDNLCKRYQEGSVQTDVLLNVSFSVGEGEMMAIVGSSGSGKSTLLHLLGGLDTPTSGDVIFNGQPMSKLSSAAKAELRNQKLGFIYQFHHLLPDFTALENVAMPLLIGKKKPAEINSCALEMLKAVGLEHRANHRPSELSGGERQRVAIARALVNNPRLVLADEPTGNLDARNADSIFQLLGELNRLQGTAFLVVTHDLQLAKRMSRQLEMRDGRLTAELSLMGAE</sequence>
<feature type="chain" id="PRO_0000092461" description="Lipoprotein-releasing system ATP-binding protein LolD">
    <location>
        <begin position="1"/>
        <end position="233"/>
    </location>
</feature>
<feature type="domain" description="ABC transporter" evidence="1">
    <location>
        <begin position="6"/>
        <end position="233"/>
    </location>
</feature>
<feature type="binding site" evidence="1">
    <location>
        <begin position="42"/>
        <end position="49"/>
    </location>
    <ligand>
        <name>ATP</name>
        <dbReference type="ChEBI" id="CHEBI:30616"/>
    </ligand>
</feature>
<evidence type="ECO:0000255" key="1">
    <source>
        <dbReference type="HAMAP-Rule" id="MF_01708"/>
    </source>
</evidence>
<dbReference type="EC" id="7.6.2.-" evidence="1"/>
<dbReference type="EMBL" id="AE005674">
    <property type="protein sequence ID" value="AAN42739.1"/>
    <property type="molecule type" value="Genomic_DNA"/>
</dbReference>
<dbReference type="EMBL" id="AE014073">
    <property type="protein sequence ID" value="AAP16628.1"/>
    <property type="molecule type" value="Genomic_DNA"/>
</dbReference>
<dbReference type="RefSeq" id="NP_707032.1">
    <property type="nucleotide sequence ID" value="NC_004337.2"/>
</dbReference>
<dbReference type="RefSeq" id="WP_001033710.1">
    <property type="nucleotide sequence ID" value="NZ_WPGW01000001.1"/>
</dbReference>
<dbReference type="SMR" id="Q83RS0"/>
<dbReference type="STRING" id="198214.SF1121"/>
<dbReference type="PaxDb" id="198214-SF1121"/>
<dbReference type="GeneID" id="1026274"/>
<dbReference type="KEGG" id="sfl:SF1121"/>
<dbReference type="KEGG" id="sfx:S1201"/>
<dbReference type="PATRIC" id="fig|198214.7.peg.1312"/>
<dbReference type="HOGENOM" id="CLU_000604_1_22_6"/>
<dbReference type="Proteomes" id="UP000001006">
    <property type="component" value="Chromosome"/>
</dbReference>
<dbReference type="Proteomes" id="UP000002673">
    <property type="component" value="Chromosome"/>
</dbReference>
<dbReference type="GO" id="GO:0005886">
    <property type="term" value="C:plasma membrane"/>
    <property type="evidence" value="ECO:0007669"/>
    <property type="project" value="UniProtKB-SubCell"/>
</dbReference>
<dbReference type="GO" id="GO:0005524">
    <property type="term" value="F:ATP binding"/>
    <property type="evidence" value="ECO:0007669"/>
    <property type="project" value="UniProtKB-KW"/>
</dbReference>
<dbReference type="GO" id="GO:0016887">
    <property type="term" value="F:ATP hydrolysis activity"/>
    <property type="evidence" value="ECO:0007669"/>
    <property type="project" value="InterPro"/>
</dbReference>
<dbReference type="GO" id="GO:0022857">
    <property type="term" value="F:transmembrane transporter activity"/>
    <property type="evidence" value="ECO:0007669"/>
    <property type="project" value="TreeGrafter"/>
</dbReference>
<dbReference type="GO" id="GO:0044874">
    <property type="term" value="P:lipoprotein localization to outer membrane"/>
    <property type="evidence" value="ECO:0007669"/>
    <property type="project" value="TreeGrafter"/>
</dbReference>
<dbReference type="GO" id="GO:0089705">
    <property type="term" value="P:protein localization to outer membrane"/>
    <property type="evidence" value="ECO:0007669"/>
    <property type="project" value="TreeGrafter"/>
</dbReference>
<dbReference type="CDD" id="cd03255">
    <property type="entry name" value="ABC_MJ0796_LolCDE_FtsE"/>
    <property type="match status" value="1"/>
</dbReference>
<dbReference type="FunFam" id="3.40.50.300:FF:000230">
    <property type="entry name" value="Lipoprotein-releasing system ATP-binding protein LolD"/>
    <property type="match status" value="1"/>
</dbReference>
<dbReference type="Gene3D" id="3.40.50.300">
    <property type="entry name" value="P-loop containing nucleotide triphosphate hydrolases"/>
    <property type="match status" value="1"/>
</dbReference>
<dbReference type="InterPro" id="IPR003593">
    <property type="entry name" value="AAA+_ATPase"/>
</dbReference>
<dbReference type="InterPro" id="IPR003439">
    <property type="entry name" value="ABC_transporter-like_ATP-bd"/>
</dbReference>
<dbReference type="InterPro" id="IPR017871">
    <property type="entry name" value="ABC_transporter-like_CS"/>
</dbReference>
<dbReference type="InterPro" id="IPR015854">
    <property type="entry name" value="ABC_transpr_LolD-like"/>
</dbReference>
<dbReference type="InterPro" id="IPR011924">
    <property type="entry name" value="LolD_lipo_ATP-bd"/>
</dbReference>
<dbReference type="InterPro" id="IPR017911">
    <property type="entry name" value="MacB-like_ATP-bd"/>
</dbReference>
<dbReference type="InterPro" id="IPR027417">
    <property type="entry name" value="P-loop_NTPase"/>
</dbReference>
<dbReference type="NCBIfam" id="TIGR02211">
    <property type="entry name" value="LolD_lipo_ex"/>
    <property type="match status" value="1"/>
</dbReference>
<dbReference type="NCBIfam" id="NF008639">
    <property type="entry name" value="PRK11629.1"/>
    <property type="match status" value="1"/>
</dbReference>
<dbReference type="PANTHER" id="PTHR24220">
    <property type="entry name" value="IMPORT ATP-BINDING PROTEIN"/>
    <property type="match status" value="1"/>
</dbReference>
<dbReference type="PANTHER" id="PTHR24220:SF689">
    <property type="entry name" value="LIPOPROTEIN-RELEASING SYSTEM ATP-BINDING PROTEIN LOLD"/>
    <property type="match status" value="1"/>
</dbReference>
<dbReference type="Pfam" id="PF00005">
    <property type="entry name" value="ABC_tran"/>
    <property type="match status" value="1"/>
</dbReference>
<dbReference type="SMART" id="SM00382">
    <property type="entry name" value="AAA"/>
    <property type="match status" value="1"/>
</dbReference>
<dbReference type="SUPFAM" id="SSF52540">
    <property type="entry name" value="P-loop containing nucleoside triphosphate hydrolases"/>
    <property type="match status" value="1"/>
</dbReference>
<dbReference type="PROSITE" id="PS00211">
    <property type="entry name" value="ABC_TRANSPORTER_1"/>
    <property type="match status" value="1"/>
</dbReference>
<dbReference type="PROSITE" id="PS50893">
    <property type="entry name" value="ABC_TRANSPORTER_2"/>
    <property type="match status" value="1"/>
</dbReference>
<dbReference type="PROSITE" id="PS51244">
    <property type="entry name" value="LOLD"/>
    <property type="match status" value="1"/>
</dbReference>
<name>LOLD_SHIFL</name>
<keyword id="KW-0067">ATP-binding</keyword>
<keyword id="KW-0997">Cell inner membrane</keyword>
<keyword id="KW-1003">Cell membrane</keyword>
<keyword id="KW-0472">Membrane</keyword>
<keyword id="KW-0547">Nucleotide-binding</keyword>
<keyword id="KW-1185">Reference proteome</keyword>
<keyword id="KW-1278">Translocase</keyword>
<keyword id="KW-0813">Transport</keyword>
<proteinExistence type="inferred from homology"/>